<sequence>MTDQQTNGAAAEDNSPQFSLQRIYVRDLSFEAPKSPQIFRQTWEPSVALDLNTKQKSLEGDFHEVVLTLSVTVKNGDEVAFIAEVQQAGIFLIANLDAPSMSHTLGAFCPNILFPYAREALDSLVTRGSFPALMLSPVNFDALYAQEMQRMQEAGEAPTVQ</sequence>
<comment type="function">
    <text evidence="1">One of the proteins required for the normal export of preproteins out of the cell cytoplasm. It is a molecular chaperone that binds to a subset of precursor proteins, maintaining them in a translocation-competent state. It also specifically binds to its receptor SecA.</text>
</comment>
<comment type="subunit">
    <text evidence="1">Homotetramer, a dimer of dimers. One homotetramer interacts with 1 SecA dimer.</text>
</comment>
<comment type="subcellular location">
    <subcellularLocation>
        <location evidence="1">Cytoplasm</location>
    </subcellularLocation>
</comment>
<comment type="similarity">
    <text evidence="1">Belongs to the SecB family.</text>
</comment>
<accession>Q88CX7</accession>
<organism>
    <name type="scientific">Pseudomonas putida (strain ATCC 47054 / DSM 6125 / CFBP 8728 / NCIMB 11950 / KT2440)</name>
    <dbReference type="NCBI Taxonomy" id="160488"/>
    <lineage>
        <taxon>Bacteria</taxon>
        <taxon>Pseudomonadati</taxon>
        <taxon>Pseudomonadota</taxon>
        <taxon>Gammaproteobacteria</taxon>
        <taxon>Pseudomonadales</taxon>
        <taxon>Pseudomonadaceae</taxon>
        <taxon>Pseudomonas</taxon>
    </lineage>
</organism>
<evidence type="ECO:0000255" key="1">
    <source>
        <dbReference type="HAMAP-Rule" id="MF_00821"/>
    </source>
</evidence>
<protein>
    <recommendedName>
        <fullName evidence="1">Protein-export protein SecB</fullName>
    </recommendedName>
</protein>
<keyword id="KW-0143">Chaperone</keyword>
<keyword id="KW-0963">Cytoplasm</keyword>
<keyword id="KW-0653">Protein transport</keyword>
<keyword id="KW-1185">Reference proteome</keyword>
<keyword id="KW-0811">Translocation</keyword>
<keyword id="KW-0813">Transport</keyword>
<proteinExistence type="inferred from homology"/>
<gene>
    <name evidence="1" type="primary">secB</name>
    <name type="ordered locus">PP_5053</name>
</gene>
<feature type="chain" id="PRO_0000055398" description="Protein-export protein SecB">
    <location>
        <begin position="1"/>
        <end position="161"/>
    </location>
</feature>
<dbReference type="EMBL" id="AE015451">
    <property type="protein sequence ID" value="AAN70618.1"/>
    <property type="molecule type" value="Genomic_DNA"/>
</dbReference>
<dbReference type="RefSeq" id="NP_747154.1">
    <property type="nucleotide sequence ID" value="NC_002947.4"/>
</dbReference>
<dbReference type="RefSeq" id="WP_003249206.1">
    <property type="nucleotide sequence ID" value="NZ_CP169744.1"/>
</dbReference>
<dbReference type="SMR" id="Q88CX7"/>
<dbReference type="STRING" id="160488.PP_5053"/>
<dbReference type="PaxDb" id="160488-PP_5053"/>
<dbReference type="GeneID" id="83682786"/>
<dbReference type="KEGG" id="ppu:PP_5053"/>
<dbReference type="PATRIC" id="fig|160488.4.peg.5394"/>
<dbReference type="eggNOG" id="COG1952">
    <property type="taxonomic scope" value="Bacteria"/>
</dbReference>
<dbReference type="HOGENOM" id="CLU_111574_1_0_6"/>
<dbReference type="OrthoDB" id="9795145at2"/>
<dbReference type="PhylomeDB" id="Q88CX7"/>
<dbReference type="BioCyc" id="PPUT160488:G1G01-5397-MONOMER"/>
<dbReference type="Proteomes" id="UP000000556">
    <property type="component" value="Chromosome"/>
</dbReference>
<dbReference type="GO" id="GO:0005737">
    <property type="term" value="C:cytoplasm"/>
    <property type="evidence" value="ECO:0007669"/>
    <property type="project" value="UniProtKB-SubCell"/>
</dbReference>
<dbReference type="GO" id="GO:0051082">
    <property type="term" value="F:unfolded protein binding"/>
    <property type="evidence" value="ECO:0007669"/>
    <property type="project" value="InterPro"/>
</dbReference>
<dbReference type="GO" id="GO:0006457">
    <property type="term" value="P:protein folding"/>
    <property type="evidence" value="ECO:0007669"/>
    <property type="project" value="UniProtKB-UniRule"/>
</dbReference>
<dbReference type="GO" id="GO:0051262">
    <property type="term" value="P:protein tetramerization"/>
    <property type="evidence" value="ECO:0007669"/>
    <property type="project" value="InterPro"/>
</dbReference>
<dbReference type="GO" id="GO:0015031">
    <property type="term" value="P:protein transport"/>
    <property type="evidence" value="ECO:0007669"/>
    <property type="project" value="UniProtKB-UniRule"/>
</dbReference>
<dbReference type="Gene3D" id="3.10.420.10">
    <property type="entry name" value="SecB-like"/>
    <property type="match status" value="1"/>
</dbReference>
<dbReference type="HAMAP" id="MF_00821">
    <property type="entry name" value="SecB"/>
    <property type="match status" value="1"/>
</dbReference>
<dbReference type="InterPro" id="IPR003708">
    <property type="entry name" value="SecB"/>
</dbReference>
<dbReference type="InterPro" id="IPR035958">
    <property type="entry name" value="SecB-like_sf"/>
</dbReference>
<dbReference type="NCBIfam" id="NF004393">
    <property type="entry name" value="PRK05751.1-4"/>
    <property type="match status" value="1"/>
</dbReference>
<dbReference type="NCBIfam" id="TIGR00809">
    <property type="entry name" value="secB"/>
    <property type="match status" value="1"/>
</dbReference>
<dbReference type="PANTHER" id="PTHR36918">
    <property type="match status" value="1"/>
</dbReference>
<dbReference type="PANTHER" id="PTHR36918:SF1">
    <property type="entry name" value="PROTEIN-EXPORT PROTEIN SECB"/>
    <property type="match status" value="1"/>
</dbReference>
<dbReference type="Pfam" id="PF02556">
    <property type="entry name" value="SecB"/>
    <property type="match status" value="1"/>
</dbReference>
<dbReference type="PRINTS" id="PR01594">
    <property type="entry name" value="SECBCHAPRONE"/>
</dbReference>
<dbReference type="SUPFAM" id="SSF54611">
    <property type="entry name" value="SecB-like"/>
    <property type="match status" value="1"/>
</dbReference>
<reference key="1">
    <citation type="journal article" date="2002" name="Environ. Microbiol.">
        <title>Complete genome sequence and comparative analysis of the metabolically versatile Pseudomonas putida KT2440.</title>
        <authorList>
            <person name="Nelson K.E."/>
            <person name="Weinel C."/>
            <person name="Paulsen I.T."/>
            <person name="Dodson R.J."/>
            <person name="Hilbert H."/>
            <person name="Martins dos Santos V.A.P."/>
            <person name="Fouts D.E."/>
            <person name="Gill S.R."/>
            <person name="Pop M."/>
            <person name="Holmes M."/>
            <person name="Brinkac L.M."/>
            <person name="Beanan M.J."/>
            <person name="DeBoy R.T."/>
            <person name="Daugherty S.C."/>
            <person name="Kolonay J.F."/>
            <person name="Madupu R."/>
            <person name="Nelson W.C."/>
            <person name="White O."/>
            <person name="Peterson J.D."/>
            <person name="Khouri H.M."/>
            <person name="Hance I."/>
            <person name="Chris Lee P."/>
            <person name="Holtzapple E.K."/>
            <person name="Scanlan D."/>
            <person name="Tran K."/>
            <person name="Moazzez A."/>
            <person name="Utterback T.R."/>
            <person name="Rizzo M."/>
            <person name="Lee K."/>
            <person name="Kosack D."/>
            <person name="Moestl D."/>
            <person name="Wedler H."/>
            <person name="Lauber J."/>
            <person name="Stjepandic D."/>
            <person name="Hoheisel J."/>
            <person name="Straetz M."/>
            <person name="Heim S."/>
            <person name="Kiewitz C."/>
            <person name="Eisen J.A."/>
            <person name="Timmis K.N."/>
            <person name="Duesterhoeft A."/>
            <person name="Tuemmler B."/>
            <person name="Fraser C.M."/>
        </authorList>
    </citation>
    <scope>NUCLEOTIDE SEQUENCE [LARGE SCALE GENOMIC DNA]</scope>
    <source>
        <strain>ATCC 47054 / DSM 6125 / CFBP 8728 / NCIMB 11950 / KT2440</strain>
    </source>
</reference>
<name>SECB_PSEPK</name>